<feature type="chain" id="PRO_0000188687" description="1,4-alpha-glucan branching enzyme GlgB">
    <location>
        <begin position="1"/>
        <end position="731"/>
    </location>
</feature>
<feature type="active site" description="Nucleophile" evidence="1">
    <location>
        <position position="412"/>
    </location>
</feature>
<feature type="active site" description="Proton donor" evidence="1">
    <location>
        <position position="465"/>
    </location>
</feature>
<proteinExistence type="inferred from homology"/>
<accession>Q7VYK0</accession>
<gene>
    <name evidence="1" type="primary">glgB</name>
    <name type="ordered locus">BP1328</name>
</gene>
<keyword id="KW-0119">Carbohydrate metabolism</keyword>
<keyword id="KW-0320">Glycogen biosynthesis</keyword>
<keyword id="KW-0321">Glycogen metabolism</keyword>
<keyword id="KW-0328">Glycosyltransferase</keyword>
<keyword id="KW-1185">Reference proteome</keyword>
<keyword id="KW-0808">Transferase</keyword>
<name>GLGB_BORPE</name>
<organism>
    <name type="scientific">Bordetella pertussis (strain Tohama I / ATCC BAA-589 / NCTC 13251)</name>
    <dbReference type="NCBI Taxonomy" id="257313"/>
    <lineage>
        <taxon>Bacteria</taxon>
        <taxon>Pseudomonadati</taxon>
        <taxon>Pseudomonadota</taxon>
        <taxon>Betaproteobacteria</taxon>
        <taxon>Burkholderiales</taxon>
        <taxon>Alcaligenaceae</taxon>
        <taxon>Bordetella</taxon>
    </lineage>
</organism>
<sequence length="731" mass="80327">MMRDSPSIQGTLDAATQHALLAGRHADPFSVLGPHQAGAHTVVRVLAPGARTVMAVLPGGQRTPLLPMQPGLFENTVPGLQPGAPAAYRLCIEWEGGIQHTADPYAFGPVLDAAQLDHCAAGGWRYLAGLLGAHAASVDGCAGTRFALWAPNARRVAVVGDFNGWDGRRHAMRLRYPAGVWELFLPDVGPGARYKFQVLGADGHTVLKADPLARQAEAPPATASIVPDERPFAWTDKAWMEQRAARQRCDAPISIYEVHAGSWFDDAGAPRWQNLAARLPEYARSLGFTHIELLPVMAHPFGGSWGYQPLGLFAPAAAHGAPADFAHFVDRCHEAGLGVILDWVPAHFPDDAHGLARLDGTPLYEHADPREGRHPDWNTLIYNYGRREVRTFLIASAIHWLRHYHVDGLRVDAVASMLYRDYSRPAGQWIPNRHGRRENLEAIDFLRELNAAVGVQCPGAITVAEESTAWPGVTAPVANGGLGFDYKWNMGWMHDTLRYMRRDPIHRRHHHHDLSFGMVYAYAERFVLPLSHDEVVHGKGSLLGKMPGERAAQLAQLRLYYAFMWAHPGKKLLFMGGEFGQQGEWNHDAMLQWSLLDDPAHRGLQRLVADLNHVYATLPELHCRDADPSGFAWIVGDDADNSVLAFARVDASHCLVAVCNFTPVPRPGYRFGVPHAGDWRVRVDTGATRYGGAGGGPPICLRSEPIPAHGHPQSLVLDLPGFTALYLRHSE</sequence>
<dbReference type="EC" id="2.4.1.18" evidence="1"/>
<dbReference type="EMBL" id="BX640415">
    <property type="protein sequence ID" value="CAE41621.1"/>
    <property type="molecule type" value="Genomic_DNA"/>
</dbReference>
<dbReference type="RefSeq" id="NP_880086.1">
    <property type="nucleotide sequence ID" value="NC_002929.2"/>
</dbReference>
<dbReference type="RefSeq" id="WP_010930307.1">
    <property type="nucleotide sequence ID" value="NZ_CP039022.1"/>
</dbReference>
<dbReference type="SMR" id="Q7VYK0"/>
<dbReference type="STRING" id="257313.BP1328"/>
<dbReference type="CAZy" id="CBM48">
    <property type="family name" value="Carbohydrate-Binding Module Family 48"/>
</dbReference>
<dbReference type="CAZy" id="GH13">
    <property type="family name" value="Glycoside Hydrolase Family 13"/>
</dbReference>
<dbReference type="PaxDb" id="257313-BP1328"/>
<dbReference type="DNASU" id="2665202"/>
<dbReference type="GeneID" id="69601242"/>
<dbReference type="KEGG" id="bpe:BP1328"/>
<dbReference type="PATRIC" id="fig|257313.5.peg.1429"/>
<dbReference type="eggNOG" id="COG0296">
    <property type="taxonomic scope" value="Bacteria"/>
</dbReference>
<dbReference type="HOGENOM" id="CLU_004245_3_2_4"/>
<dbReference type="UniPathway" id="UPA00164"/>
<dbReference type="Proteomes" id="UP000002676">
    <property type="component" value="Chromosome"/>
</dbReference>
<dbReference type="GO" id="GO:0005829">
    <property type="term" value="C:cytosol"/>
    <property type="evidence" value="ECO:0007669"/>
    <property type="project" value="TreeGrafter"/>
</dbReference>
<dbReference type="GO" id="GO:0003844">
    <property type="term" value="F:1,4-alpha-glucan branching enzyme activity"/>
    <property type="evidence" value="ECO:0007669"/>
    <property type="project" value="UniProtKB-UniRule"/>
</dbReference>
<dbReference type="GO" id="GO:0043169">
    <property type="term" value="F:cation binding"/>
    <property type="evidence" value="ECO:0007669"/>
    <property type="project" value="InterPro"/>
</dbReference>
<dbReference type="GO" id="GO:0004553">
    <property type="term" value="F:hydrolase activity, hydrolyzing O-glycosyl compounds"/>
    <property type="evidence" value="ECO:0007669"/>
    <property type="project" value="InterPro"/>
</dbReference>
<dbReference type="GO" id="GO:0005978">
    <property type="term" value="P:glycogen biosynthetic process"/>
    <property type="evidence" value="ECO:0007669"/>
    <property type="project" value="UniProtKB-UniRule"/>
</dbReference>
<dbReference type="CDD" id="cd11322">
    <property type="entry name" value="AmyAc_Glg_BE"/>
    <property type="match status" value="1"/>
</dbReference>
<dbReference type="CDD" id="cd02855">
    <property type="entry name" value="E_set_GBE_prok_N"/>
    <property type="match status" value="1"/>
</dbReference>
<dbReference type="FunFam" id="2.60.40.10:FF:000169">
    <property type="entry name" value="1,4-alpha-glucan branching enzyme GlgB"/>
    <property type="match status" value="1"/>
</dbReference>
<dbReference type="FunFam" id="2.60.40.1180:FF:000002">
    <property type="entry name" value="1,4-alpha-glucan branching enzyme GlgB"/>
    <property type="match status" value="1"/>
</dbReference>
<dbReference type="FunFam" id="3.20.20.80:FF:000003">
    <property type="entry name" value="1,4-alpha-glucan branching enzyme GlgB"/>
    <property type="match status" value="1"/>
</dbReference>
<dbReference type="Gene3D" id="3.20.20.80">
    <property type="entry name" value="Glycosidases"/>
    <property type="match status" value="1"/>
</dbReference>
<dbReference type="Gene3D" id="2.60.40.1180">
    <property type="entry name" value="Golgi alpha-mannosidase II"/>
    <property type="match status" value="1"/>
</dbReference>
<dbReference type="Gene3D" id="2.60.40.10">
    <property type="entry name" value="Immunoglobulins"/>
    <property type="match status" value="2"/>
</dbReference>
<dbReference type="HAMAP" id="MF_00685">
    <property type="entry name" value="GlgB"/>
    <property type="match status" value="1"/>
</dbReference>
<dbReference type="InterPro" id="IPR006048">
    <property type="entry name" value="A-amylase/branching_C"/>
</dbReference>
<dbReference type="InterPro" id="IPR037439">
    <property type="entry name" value="Branching_enzy"/>
</dbReference>
<dbReference type="InterPro" id="IPR006407">
    <property type="entry name" value="GlgB"/>
</dbReference>
<dbReference type="InterPro" id="IPR054169">
    <property type="entry name" value="GlgB_N"/>
</dbReference>
<dbReference type="InterPro" id="IPR044143">
    <property type="entry name" value="GlgB_N_E_set_prok"/>
</dbReference>
<dbReference type="InterPro" id="IPR006047">
    <property type="entry name" value="Glyco_hydro_13_cat_dom"/>
</dbReference>
<dbReference type="InterPro" id="IPR004193">
    <property type="entry name" value="Glyco_hydro_13_N"/>
</dbReference>
<dbReference type="InterPro" id="IPR013780">
    <property type="entry name" value="Glyco_hydro_b"/>
</dbReference>
<dbReference type="InterPro" id="IPR017853">
    <property type="entry name" value="Glycoside_hydrolase_SF"/>
</dbReference>
<dbReference type="InterPro" id="IPR013783">
    <property type="entry name" value="Ig-like_fold"/>
</dbReference>
<dbReference type="InterPro" id="IPR014756">
    <property type="entry name" value="Ig_E-set"/>
</dbReference>
<dbReference type="NCBIfam" id="TIGR01515">
    <property type="entry name" value="branching_enzym"/>
    <property type="match status" value="1"/>
</dbReference>
<dbReference type="NCBIfam" id="NF003811">
    <property type="entry name" value="PRK05402.1"/>
    <property type="match status" value="1"/>
</dbReference>
<dbReference type="NCBIfam" id="NF008967">
    <property type="entry name" value="PRK12313.1"/>
    <property type="match status" value="1"/>
</dbReference>
<dbReference type="PANTHER" id="PTHR43651">
    <property type="entry name" value="1,4-ALPHA-GLUCAN-BRANCHING ENZYME"/>
    <property type="match status" value="1"/>
</dbReference>
<dbReference type="PANTHER" id="PTHR43651:SF3">
    <property type="entry name" value="1,4-ALPHA-GLUCAN-BRANCHING ENZYME"/>
    <property type="match status" value="1"/>
</dbReference>
<dbReference type="Pfam" id="PF00128">
    <property type="entry name" value="Alpha-amylase"/>
    <property type="match status" value="1"/>
</dbReference>
<dbReference type="Pfam" id="PF02806">
    <property type="entry name" value="Alpha-amylase_C"/>
    <property type="match status" value="1"/>
</dbReference>
<dbReference type="Pfam" id="PF02922">
    <property type="entry name" value="CBM_48"/>
    <property type="match status" value="1"/>
</dbReference>
<dbReference type="Pfam" id="PF22019">
    <property type="entry name" value="GlgB_N"/>
    <property type="match status" value="1"/>
</dbReference>
<dbReference type="PIRSF" id="PIRSF000463">
    <property type="entry name" value="GlgB"/>
    <property type="match status" value="1"/>
</dbReference>
<dbReference type="SMART" id="SM00642">
    <property type="entry name" value="Aamy"/>
    <property type="match status" value="1"/>
</dbReference>
<dbReference type="SUPFAM" id="SSF51445">
    <property type="entry name" value="(Trans)glycosidases"/>
    <property type="match status" value="1"/>
</dbReference>
<dbReference type="SUPFAM" id="SSF81296">
    <property type="entry name" value="E set domains"/>
    <property type="match status" value="1"/>
</dbReference>
<dbReference type="SUPFAM" id="SSF51011">
    <property type="entry name" value="Glycosyl hydrolase domain"/>
    <property type="match status" value="1"/>
</dbReference>
<reference key="1">
    <citation type="journal article" date="2003" name="Nat. Genet.">
        <title>Comparative analysis of the genome sequences of Bordetella pertussis, Bordetella parapertussis and Bordetella bronchiseptica.</title>
        <authorList>
            <person name="Parkhill J."/>
            <person name="Sebaihia M."/>
            <person name="Preston A."/>
            <person name="Murphy L.D."/>
            <person name="Thomson N.R."/>
            <person name="Harris D.E."/>
            <person name="Holden M.T.G."/>
            <person name="Churcher C.M."/>
            <person name="Bentley S.D."/>
            <person name="Mungall K.L."/>
            <person name="Cerdeno-Tarraga A.-M."/>
            <person name="Temple L."/>
            <person name="James K.D."/>
            <person name="Harris B."/>
            <person name="Quail M.A."/>
            <person name="Achtman M."/>
            <person name="Atkin R."/>
            <person name="Baker S."/>
            <person name="Basham D."/>
            <person name="Bason N."/>
            <person name="Cherevach I."/>
            <person name="Chillingworth T."/>
            <person name="Collins M."/>
            <person name="Cronin A."/>
            <person name="Davis P."/>
            <person name="Doggett J."/>
            <person name="Feltwell T."/>
            <person name="Goble A."/>
            <person name="Hamlin N."/>
            <person name="Hauser H."/>
            <person name="Holroyd S."/>
            <person name="Jagels K."/>
            <person name="Leather S."/>
            <person name="Moule S."/>
            <person name="Norberczak H."/>
            <person name="O'Neil S."/>
            <person name="Ormond D."/>
            <person name="Price C."/>
            <person name="Rabbinowitsch E."/>
            <person name="Rutter S."/>
            <person name="Sanders M."/>
            <person name="Saunders D."/>
            <person name="Seeger K."/>
            <person name="Sharp S."/>
            <person name="Simmonds M."/>
            <person name="Skelton J."/>
            <person name="Squares R."/>
            <person name="Squares S."/>
            <person name="Stevens K."/>
            <person name="Unwin L."/>
            <person name="Whitehead S."/>
            <person name="Barrell B.G."/>
            <person name="Maskell D.J."/>
        </authorList>
    </citation>
    <scope>NUCLEOTIDE SEQUENCE [LARGE SCALE GENOMIC DNA]</scope>
    <source>
        <strain>Tohama I / ATCC BAA-589 / NCTC 13251</strain>
    </source>
</reference>
<evidence type="ECO:0000255" key="1">
    <source>
        <dbReference type="HAMAP-Rule" id="MF_00685"/>
    </source>
</evidence>
<comment type="function">
    <text evidence="1">Catalyzes the formation of the alpha-1,6-glucosidic linkages in glycogen by scission of a 1,4-alpha-linked oligosaccharide from growing alpha-1,4-glucan chains and the subsequent attachment of the oligosaccharide to the alpha-1,6 position.</text>
</comment>
<comment type="catalytic activity">
    <reaction evidence="1">
        <text>Transfers a segment of a (1-&gt;4)-alpha-D-glucan chain to a primary hydroxy group in a similar glucan chain.</text>
        <dbReference type="EC" id="2.4.1.18"/>
    </reaction>
</comment>
<comment type="pathway">
    <text evidence="1">Glycan biosynthesis; glycogen biosynthesis.</text>
</comment>
<comment type="subunit">
    <text evidence="1">Monomer.</text>
</comment>
<comment type="similarity">
    <text evidence="1">Belongs to the glycosyl hydrolase 13 family. GlgB subfamily.</text>
</comment>
<protein>
    <recommendedName>
        <fullName evidence="1">1,4-alpha-glucan branching enzyme GlgB</fullName>
        <ecNumber evidence="1">2.4.1.18</ecNumber>
    </recommendedName>
    <alternativeName>
        <fullName evidence="1">1,4-alpha-D-glucan:1,4-alpha-D-glucan 6-glucosyl-transferase</fullName>
    </alternativeName>
    <alternativeName>
        <fullName evidence="1">Alpha-(1-&gt;4)-glucan branching enzyme</fullName>
    </alternativeName>
    <alternativeName>
        <fullName evidence="1">Glycogen branching enzyme</fullName>
        <shortName evidence="1">BE</shortName>
    </alternativeName>
</protein>